<protein>
    <recommendedName>
        <fullName evidence="5">Lipopolysaccharide 1,6-galactosyltransferase</fullName>
        <ecNumber evidence="2">2.4.1.-</ecNumber>
    </recommendedName>
    <alternativeName>
        <fullName evidence="3">UDP-D-galactose:(Glucosyl)lipopolysaccharide-alpha-1,6-D-galactosyltransferase</fullName>
    </alternativeName>
    <alternativeName>
        <fullName evidence="3">UDP-D-galactose:lipopolysaccharide alpha 1,6-D-galactosyltransferase</fullName>
    </alternativeName>
</protein>
<organism>
    <name type="scientific">Salmonella typhimurium (strain LT2 / SGSC1412 / ATCC 700720)</name>
    <dbReference type="NCBI Taxonomy" id="99287"/>
    <lineage>
        <taxon>Bacteria</taxon>
        <taxon>Pseudomonadati</taxon>
        <taxon>Pseudomonadota</taxon>
        <taxon>Gammaproteobacteria</taxon>
        <taxon>Enterobacterales</taxon>
        <taxon>Enterobacteriaceae</taxon>
        <taxon>Salmonella</taxon>
    </lineage>
</organism>
<gene>
    <name evidence="4" type="primary">waaB</name>
    <name evidence="3" type="synonym">rfaB</name>
    <name type="ordered locus">STM3719</name>
</gene>
<proteinExistence type="evidence at protein level"/>
<sequence>MKIAFIGEAVSGFGGMETVISNVIHTFENSSPKINCEMFFFCRNDKMDKAWLKEIKYAQSFSNIKLSFLRRAKHVYNFSQWLKETSPDIVICIDVISCLYANKARKKSGKHFTIFSWPHFSLDHKKHAECITYADYHLAISSGIKEQIMARGISAQDISVVYNPVSIKTVIVPPPERDKPAVFLYVGRLKFEGQKRVKDLFDGLARTTGEWQLHIIGDGSDFEKCQAYSRELGIEQRVIWYGWQSAPWQVVQQKIKNVTALLLTSAFEGFPMTLLEAMSYGIPCISSDCMSGPRDMIKPGLNGELYTPGAIDDFVGHLNRVISGEVKYQHDIIPGTIERFYDVLYFKNFNNAIFSKLQK</sequence>
<evidence type="ECO:0000269" key="1">
    <source>
    </source>
</evidence>
<evidence type="ECO:0000269" key="2">
    <source>
    </source>
</evidence>
<evidence type="ECO:0000303" key="3">
    <source>
    </source>
</evidence>
<evidence type="ECO:0000303" key="4">
    <source>
    </source>
</evidence>
<evidence type="ECO:0000305" key="5"/>
<evidence type="ECO:0007744" key="6">
    <source>
        <dbReference type="PDB" id="5N7Z"/>
    </source>
</evidence>
<evidence type="ECO:0007744" key="7">
    <source>
        <dbReference type="PDB" id="5N80"/>
    </source>
</evidence>
<evidence type="ECO:0007744" key="8">
    <source>
        <dbReference type="PDB" id="6Y6G"/>
    </source>
</evidence>
<evidence type="ECO:0007744" key="9">
    <source>
        <dbReference type="PDB" id="6Y6I"/>
    </source>
</evidence>
<evidence type="ECO:0007829" key="10">
    <source>
        <dbReference type="PDB" id="5N7Z"/>
    </source>
</evidence>
<evidence type="ECO:0007829" key="11">
    <source>
        <dbReference type="PDB" id="5N80"/>
    </source>
</evidence>
<comment type="function">
    <text evidence="2">Galactosyltransferase involved in the biosynthesis of the core oligosaccharide region of lipopolysaccharide (LPS) (PubMed:6403519). Catalyzes the addition of galactose from UDP-galactose to the first glucose residue of the LPS outer core (PubMed:6403519).</text>
</comment>
<comment type="catalytic activity">
    <reaction evidence="2">
        <text>alpha-D-Glc-(1-&gt;3)-[L-alpha-D-Hep-(1-&gt;7)]-4-O-PO3(2-)-L-alpha-D-Hep-(1-&gt;3)-4-O-PO3(2-)-L-alpha-D-Hep-(1-&gt;5)-[alpha-Kdo-(2-&gt;4)]-alpha-Kdo-(2-&gt;6)-lipid A + UDP-alpha-D-galactose = alpha-D-Gal-(1-&gt;6)-alpha-D-Glc-(1-&gt;3)-[L-alpha-D-Hep-(1-&gt;7)]-4-O-PO3(2-)-L-alpha-D-Hep-(1-&gt;3)-4-O-PO3(2-)-L-alpha-D-Hep-(1-&gt;5)-[alpha-Kdo-(2-&gt;4)]-alpha-Kdo-(2-&gt;6)-lipid A + UDP + H(+)</text>
        <dbReference type="Rhea" id="RHEA:29959"/>
        <dbReference type="ChEBI" id="CHEBI:15378"/>
        <dbReference type="ChEBI" id="CHEBI:58223"/>
        <dbReference type="ChEBI" id="CHEBI:62000"/>
        <dbReference type="ChEBI" id="CHEBI:62001"/>
        <dbReference type="ChEBI" id="CHEBI:66914"/>
    </reaction>
</comment>
<comment type="pathway">
    <text evidence="2">Bacterial outer membrane biogenesis; LPS core biosynthesis.</text>
</comment>
<comment type="disruption phenotype">
    <text evidence="1 2">Mutant lacks the alpha l,6-linked D-galactosyl residue of the core lipopolysaccharide (PubMed:6403519). Deletion mutant shows a lower invasive capacity than the wild type, but the difference is not statistically significant (PubMed:16495526).</text>
</comment>
<comment type="similarity">
    <text evidence="5">Belongs to the glycosyltransferase group 1 family. Glycosyltransferase 4 subfamily.</text>
</comment>
<name>WAAB_SALTY</name>
<reference key="1">
    <citation type="journal article" date="1998" name="J. Biol. Chem.">
        <title>The assembly system for the lipopolysaccharide R2 core-type of Escherichia coli is a hybrid of those found in Escherichia coli K-12 and Salmonella enterica. Structure and function of the R2 WaaK and WaaL homologs.</title>
        <authorList>
            <person name="Heinrichs D.E."/>
            <person name="Monteiro M.A."/>
            <person name="Perry M.B."/>
            <person name="Whitfield C."/>
        </authorList>
    </citation>
    <scope>NUCLEOTIDE SEQUENCE [GENOMIC DNA]</scope>
    <source>
        <strain>LT2</strain>
    </source>
</reference>
<reference key="2">
    <citation type="journal article" date="2001" name="Nature">
        <title>Complete genome sequence of Salmonella enterica serovar Typhimurium LT2.</title>
        <authorList>
            <person name="McClelland M."/>
            <person name="Sanderson K.E."/>
            <person name="Spieth J."/>
            <person name="Clifton S.W."/>
            <person name="Latreille P."/>
            <person name="Courtney L."/>
            <person name="Porwollik S."/>
            <person name="Ali J."/>
            <person name="Dante M."/>
            <person name="Du F."/>
            <person name="Hou S."/>
            <person name="Layman D."/>
            <person name="Leonard S."/>
            <person name="Nguyen C."/>
            <person name="Scott K."/>
            <person name="Holmes A."/>
            <person name="Grewal N."/>
            <person name="Mulvaney E."/>
            <person name="Ryan E."/>
            <person name="Sun H."/>
            <person name="Florea L."/>
            <person name="Miller W."/>
            <person name="Stoneking T."/>
            <person name="Nhan M."/>
            <person name="Waterston R."/>
            <person name="Wilson R.K."/>
        </authorList>
    </citation>
    <scope>NUCLEOTIDE SEQUENCE [LARGE SCALE GENOMIC DNA]</scope>
    <source>
        <strain>LT2 / SGSC1412 / ATCC 700720</strain>
    </source>
</reference>
<reference key="3">
    <citation type="journal article" date="1993" name="J. Bacteriol.">
        <title>The rfaS gene, which is involved in production of a rough form of lipopolysaccharide core in Escherichia coli K-12, is not present in the rfa cluster of Salmonella typhimurium LT2.</title>
        <authorList>
            <person name="Klena J.D."/>
            <person name="Pradel E."/>
            <person name="Schnaitman C.A."/>
        </authorList>
    </citation>
    <scope>NUCLEOTIDE SEQUENCE [GENOMIC DNA] OF 1-70</scope>
    <source>
        <strain>LT2</strain>
    </source>
</reference>
<reference key="4">
    <citation type="journal article" date="1983" name="J. Biol. Chem.">
        <title>Salmonella typhimurium mutants defective in UDP-D-galactose:lipopolysaccharide alpha 1,6-D-galactosyltransferase. Structural, immunochemical, and enzymologic studies of rfaB mutants.</title>
        <authorList>
            <person name="Wollin R."/>
            <person name="Creeger E.S."/>
            <person name="Rothfield L.I."/>
            <person name="Stocker B.A."/>
            <person name="Lindberg A.A."/>
        </authorList>
    </citation>
    <scope>FUNCTION</scope>
    <scope>CATALYTIC ACTIVITY</scope>
    <scope>PATHWAY</scope>
    <scope>DISRUPTION PHENOTYPE</scope>
</reference>
<reference key="5">
    <citation type="journal article" date="2006" name="Infect. Immun.">
        <title>The outer core lipopolysaccharide of Salmonella enterica serovar Typhi is required for bacterial entry into epithelial cells.</title>
        <authorList>
            <person name="Hoare A."/>
            <person name="Bittner M."/>
            <person name="Carter J."/>
            <person name="Alvarez S."/>
            <person name="Zaldivar M."/>
            <person name="Bravo D."/>
            <person name="Valvano M.A."/>
            <person name="Contreras I."/>
        </authorList>
    </citation>
    <scope>DISRUPTION PHENOTYPE</scope>
    <source>
        <strain>Ty2</strain>
    </source>
</reference>
<reference evidence="6" key="6">
    <citation type="submission" date="2017-02" db="PDB data bank">
        <title>Glycosyltransferase in LPS biosynthesis.</title>
        <authorList>
            <person name="Ashworth G.J."/>
            <person name="Zhang Z."/>
        </authorList>
    </citation>
    <scope>X-RAY CRYSTALLOGRAPHY (1.81 ANGSTROMS)</scope>
</reference>
<reference evidence="7" key="7">
    <citation type="submission" date="2017-02" db="PDB data bank">
        <title>Glycosyltransferase LPS biosynthesis in complex with UDP.</title>
        <authorList>
            <person name="Zhang Z."/>
            <person name="Ashworth G.J."/>
        </authorList>
    </citation>
    <scope>X-RAY CRYSTALLOGRAPHY (1.92 ANGSTROMS) IN COMPLEX WITH UDP</scope>
</reference>
<reference evidence="8 9" key="8">
    <citation type="submission" date="2020-02" db="PDB data bank">
        <title>Structural insights into the lipopolysaccharide outer core galactosyltransferase WaaB.</title>
        <authorList>
            <person name="Zhang Z.Y."/>
            <person name="Ashworth G."/>
            <person name="Wang Z.S."/>
            <person name="Zhu X.F."/>
            <person name="Dong C.J."/>
        </authorList>
    </citation>
    <scope>X-RAY CRYSTALLOGRAPHY (1.81 ANGSTROMS) OF APOENZYME AND IN COMPLEX WITH UDP</scope>
</reference>
<feature type="chain" id="PRO_0000080304" description="Lipopolysaccharide 1,6-galactosyltransferase">
    <location>
        <begin position="1"/>
        <end position="359"/>
    </location>
</feature>
<feature type="binding site" evidence="7 9">
    <location>
        <position position="244"/>
    </location>
    <ligand>
        <name>UDP</name>
        <dbReference type="ChEBI" id="CHEBI:58223"/>
    </ligand>
</feature>
<feature type="binding site" evidence="7 9">
    <location>
        <position position="276"/>
    </location>
    <ligand>
        <name>UDP</name>
        <dbReference type="ChEBI" id="CHEBI:58223"/>
    </ligand>
</feature>
<feature type="strand" evidence="10">
    <location>
        <begin position="3"/>
        <end position="8"/>
    </location>
</feature>
<feature type="strand" evidence="10">
    <location>
        <begin position="12"/>
        <end position="14"/>
    </location>
</feature>
<feature type="helix" evidence="10">
    <location>
        <begin position="15"/>
        <end position="28"/>
    </location>
</feature>
<feature type="strand" evidence="11">
    <location>
        <begin position="30"/>
        <end position="32"/>
    </location>
</feature>
<feature type="strand" evidence="10">
    <location>
        <begin position="36"/>
        <end position="41"/>
    </location>
</feature>
<feature type="strand" evidence="10">
    <location>
        <begin position="43"/>
        <end position="45"/>
    </location>
</feature>
<feature type="helix" evidence="10">
    <location>
        <begin position="50"/>
        <end position="52"/>
    </location>
</feature>
<feature type="strand" evidence="10">
    <location>
        <begin position="57"/>
        <end position="60"/>
    </location>
</feature>
<feature type="helix" evidence="10">
    <location>
        <begin position="67"/>
        <end position="84"/>
    </location>
</feature>
<feature type="strand" evidence="10">
    <location>
        <begin position="88"/>
        <end position="94"/>
    </location>
</feature>
<feature type="helix" evidence="10">
    <location>
        <begin position="95"/>
        <end position="108"/>
    </location>
</feature>
<feature type="strand" evidence="10">
    <location>
        <begin position="113"/>
        <end position="116"/>
    </location>
</feature>
<feature type="helix" evidence="10">
    <location>
        <begin position="122"/>
        <end position="124"/>
    </location>
</feature>
<feature type="helix" evidence="10">
    <location>
        <begin position="128"/>
        <end position="133"/>
    </location>
</feature>
<feature type="strand" evidence="10">
    <location>
        <begin position="134"/>
        <end position="141"/>
    </location>
</feature>
<feature type="helix" evidence="10">
    <location>
        <begin position="142"/>
        <end position="150"/>
    </location>
</feature>
<feature type="helix" evidence="10">
    <location>
        <begin position="155"/>
        <end position="157"/>
    </location>
</feature>
<feature type="strand" evidence="10">
    <location>
        <begin position="158"/>
        <end position="160"/>
    </location>
</feature>
<feature type="strand" evidence="10">
    <location>
        <begin position="181"/>
        <end position="187"/>
    </location>
</feature>
<feature type="turn" evidence="10">
    <location>
        <begin position="193"/>
        <end position="195"/>
    </location>
</feature>
<feature type="helix" evidence="10">
    <location>
        <begin position="197"/>
        <end position="205"/>
    </location>
</feature>
<feature type="strand" evidence="10">
    <location>
        <begin position="211"/>
        <end position="216"/>
    </location>
</feature>
<feature type="helix" evidence="10">
    <location>
        <begin position="222"/>
        <end position="231"/>
    </location>
</feature>
<feature type="helix" evidence="10">
    <location>
        <begin position="235"/>
        <end position="237"/>
    </location>
</feature>
<feature type="strand" evidence="10">
    <location>
        <begin position="238"/>
        <end position="240"/>
    </location>
</feature>
<feature type="helix" evidence="10">
    <location>
        <begin position="247"/>
        <end position="254"/>
    </location>
</feature>
<feature type="strand" evidence="10">
    <location>
        <begin position="259"/>
        <end position="263"/>
    </location>
</feature>
<feature type="helix" evidence="10">
    <location>
        <begin position="272"/>
        <end position="279"/>
    </location>
</feature>
<feature type="strand" evidence="10">
    <location>
        <begin position="284"/>
        <end position="287"/>
    </location>
</feature>
<feature type="strand" evidence="10">
    <location>
        <begin position="290"/>
        <end position="292"/>
    </location>
</feature>
<feature type="helix" evidence="10">
    <location>
        <begin position="293"/>
        <end position="296"/>
    </location>
</feature>
<feature type="turn" evidence="10">
    <location>
        <begin position="299"/>
        <end position="301"/>
    </location>
</feature>
<feature type="strand" evidence="10">
    <location>
        <begin position="302"/>
        <end position="306"/>
    </location>
</feature>
<feature type="helix" evidence="10">
    <location>
        <begin position="311"/>
        <end position="323"/>
    </location>
</feature>
<feature type="strand" evidence="10">
    <location>
        <begin position="324"/>
        <end position="326"/>
    </location>
</feature>
<feature type="helix" evidence="10">
    <location>
        <begin position="330"/>
        <end position="340"/>
    </location>
</feature>
<feature type="helix" evidence="10">
    <location>
        <begin position="342"/>
        <end position="354"/>
    </location>
</feature>
<dbReference type="EC" id="2.4.1.-" evidence="2"/>
<dbReference type="EMBL" id="AF026386">
    <property type="protein sequence ID" value="AAC16413.1"/>
    <property type="molecule type" value="Genomic_DNA"/>
</dbReference>
<dbReference type="EMBL" id="AE006468">
    <property type="protein sequence ID" value="AAL22578.1"/>
    <property type="molecule type" value="Genomic_DNA"/>
</dbReference>
<dbReference type="EMBL" id="S56361">
    <property type="protein sequence ID" value="AAB25552.2"/>
    <property type="molecule type" value="Genomic_DNA"/>
</dbReference>
<dbReference type="PIR" id="C47074">
    <property type="entry name" value="C47074"/>
</dbReference>
<dbReference type="RefSeq" id="NP_462619.1">
    <property type="nucleotide sequence ID" value="NC_003197.2"/>
</dbReference>
<dbReference type="RefSeq" id="WP_000683977.1">
    <property type="nucleotide sequence ID" value="NC_003197.2"/>
</dbReference>
<dbReference type="PDB" id="5N7Z">
    <property type="method" value="X-ray"/>
    <property type="resolution" value="1.81 A"/>
    <property type="chains" value="A=1-359"/>
</dbReference>
<dbReference type="PDB" id="5N80">
    <property type="method" value="X-ray"/>
    <property type="resolution" value="1.92 A"/>
    <property type="chains" value="A=1-359"/>
</dbReference>
<dbReference type="PDB" id="6Y6G">
    <property type="method" value="X-ray"/>
    <property type="resolution" value="1.81 A"/>
    <property type="chains" value="A=1-359"/>
</dbReference>
<dbReference type="PDB" id="6Y6I">
    <property type="method" value="X-ray"/>
    <property type="resolution" value="1.92 A"/>
    <property type="chains" value="A=1-359"/>
</dbReference>
<dbReference type="PDBsum" id="5N7Z"/>
<dbReference type="PDBsum" id="5N80"/>
<dbReference type="PDBsum" id="6Y6G"/>
<dbReference type="PDBsum" id="6Y6I"/>
<dbReference type="SMR" id="Q06994"/>
<dbReference type="STRING" id="99287.STM3719"/>
<dbReference type="CAZy" id="GT4">
    <property type="family name" value="Glycosyltransferase Family 4"/>
</dbReference>
<dbReference type="PaxDb" id="99287-STM3719"/>
<dbReference type="DNASU" id="1255243"/>
<dbReference type="GeneID" id="1255243"/>
<dbReference type="KEGG" id="stm:STM3719"/>
<dbReference type="PATRIC" id="fig|99287.12.peg.3933"/>
<dbReference type="HOGENOM" id="CLU_009583_0_0_6"/>
<dbReference type="OMA" id="LFSWPHF"/>
<dbReference type="PhylomeDB" id="Q06994"/>
<dbReference type="BioCyc" id="MetaCyc:STM3719-MONOMER"/>
<dbReference type="BioCyc" id="SENT99287:STM3719-MONOMER"/>
<dbReference type="UniPathway" id="UPA00958"/>
<dbReference type="Proteomes" id="UP000001014">
    <property type="component" value="Chromosome"/>
</dbReference>
<dbReference type="GO" id="GO:0016757">
    <property type="term" value="F:glycosyltransferase activity"/>
    <property type="evidence" value="ECO:0007669"/>
    <property type="project" value="UniProtKB-KW"/>
</dbReference>
<dbReference type="GO" id="GO:0009244">
    <property type="term" value="P:lipopolysaccharide core region biosynthetic process"/>
    <property type="evidence" value="ECO:0007669"/>
    <property type="project" value="UniProtKB-UniPathway"/>
</dbReference>
<dbReference type="CDD" id="cd03811">
    <property type="entry name" value="GT4_GT28_WabH-like"/>
    <property type="match status" value="1"/>
</dbReference>
<dbReference type="Gene3D" id="3.40.50.2000">
    <property type="entry name" value="Glycogen Phosphorylase B"/>
    <property type="match status" value="2"/>
</dbReference>
<dbReference type="InterPro" id="IPR001296">
    <property type="entry name" value="Glyco_trans_1"/>
</dbReference>
<dbReference type="InterPro" id="IPR028098">
    <property type="entry name" value="Glyco_trans_4-like_N"/>
</dbReference>
<dbReference type="NCBIfam" id="NF007396">
    <property type="entry name" value="PRK09922.1"/>
    <property type="match status" value="1"/>
</dbReference>
<dbReference type="PANTHER" id="PTHR12526">
    <property type="entry name" value="GLYCOSYLTRANSFERASE"/>
    <property type="match status" value="1"/>
</dbReference>
<dbReference type="PANTHER" id="PTHR12526:SF630">
    <property type="entry name" value="GLYCOSYLTRANSFERASE"/>
    <property type="match status" value="1"/>
</dbReference>
<dbReference type="Pfam" id="PF13439">
    <property type="entry name" value="Glyco_transf_4"/>
    <property type="match status" value="1"/>
</dbReference>
<dbReference type="Pfam" id="PF00534">
    <property type="entry name" value="Glycos_transf_1"/>
    <property type="match status" value="1"/>
</dbReference>
<dbReference type="SUPFAM" id="SSF53756">
    <property type="entry name" value="UDP-Glycosyltransferase/glycogen phosphorylase"/>
    <property type="match status" value="1"/>
</dbReference>
<accession>Q06994</accession>
<keyword id="KW-0002">3D-structure</keyword>
<keyword id="KW-0328">Glycosyltransferase</keyword>
<keyword id="KW-0448">Lipopolysaccharide biosynthesis</keyword>
<keyword id="KW-1185">Reference proteome</keyword>
<keyword id="KW-0808">Transferase</keyword>